<dbReference type="EC" id="7.-.-.-" evidence="1"/>
<dbReference type="EMBL" id="AB017508">
    <property type="protein sequence ID" value="BAA75300.1"/>
    <property type="molecule type" value="Genomic_DNA"/>
</dbReference>
<dbReference type="EMBL" id="BA000004">
    <property type="protein sequence ID" value="BAB03883.1"/>
    <property type="molecule type" value="Genomic_DNA"/>
</dbReference>
<dbReference type="PIR" id="T44412">
    <property type="entry name" value="T44412"/>
</dbReference>
<dbReference type="RefSeq" id="WP_010896346.1">
    <property type="nucleotide sequence ID" value="NC_002570.2"/>
</dbReference>
<dbReference type="SMR" id="Q9Z9J3"/>
<dbReference type="STRING" id="272558.gene:10726004"/>
<dbReference type="KEGG" id="bha:BH0164"/>
<dbReference type="eggNOG" id="COG1122">
    <property type="taxonomic scope" value="Bacteria"/>
</dbReference>
<dbReference type="HOGENOM" id="CLU_000604_1_22_9"/>
<dbReference type="OrthoDB" id="9784332at2"/>
<dbReference type="Proteomes" id="UP000001258">
    <property type="component" value="Chromosome"/>
</dbReference>
<dbReference type="GO" id="GO:0043190">
    <property type="term" value="C:ATP-binding cassette (ABC) transporter complex"/>
    <property type="evidence" value="ECO:0007669"/>
    <property type="project" value="TreeGrafter"/>
</dbReference>
<dbReference type="GO" id="GO:0005524">
    <property type="term" value="F:ATP binding"/>
    <property type="evidence" value="ECO:0007669"/>
    <property type="project" value="UniProtKB-KW"/>
</dbReference>
<dbReference type="GO" id="GO:0016887">
    <property type="term" value="F:ATP hydrolysis activity"/>
    <property type="evidence" value="ECO:0007669"/>
    <property type="project" value="InterPro"/>
</dbReference>
<dbReference type="GO" id="GO:0042626">
    <property type="term" value="F:ATPase-coupled transmembrane transporter activity"/>
    <property type="evidence" value="ECO:0007669"/>
    <property type="project" value="TreeGrafter"/>
</dbReference>
<dbReference type="CDD" id="cd03225">
    <property type="entry name" value="ABC_cobalt_CbiO_domain1"/>
    <property type="match status" value="1"/>
</dbReference>
<dbReference type="FunFam" id="3.40.50.300:FF:000224">
    <property type="entry name" value="Energy-coupling factor transporter ATP-binding protein EcfA"/>
    <property type="match status" value="1"/>
</dbReference>
<dbReference type="Gene3D" id="3.40.50.300">
    <property type="entry name" value="P-loop containing nucleotide triphosphate hydrolases"/>
    <property type="match status" value="1"/>
</dbReference>
<dbReference type="InterPro" id="IPR003593">
    <property type="entry name" value="AAA+_ATPase"/>
</dbReference>
<dbReference type="InterPro" id="IPR003439">
    <property type="entry name" value="ABC_transporter-like_ATP-bd"/>
</dbReference>
<dbReference type="InterPro" id="IPR017871">
    <property type="entry name" value="ABC_transporter-like_CS"/>
</dbReference>
<dbReference type="InterPro" id="IPR015856">
    <property type="entry name" value="ABC_transpr_CbiO/EcfA_su"/>
</dbReference>
<dbReference type="InterPro" id="IPR050095">
    <property type="entry name" value="ECF_ABC_transporter_ATP-bd"/>
</dbReference>
<dbReference type="InterPro" id="IPR030947">
    <property type="entry name" value="EcfA_1"/>
</dbReference>
<dbReference type="InterPro" id="IPR027417">
    <property type="entry name" value="P-loop_NTPase"/>
</dbReference>
<dbReference type="NCBIfam" id="TIGR04520">
    <property type="entry name" value="ECF_ATPase_1"/>
    <property type="match status" value="1"/>
</dbReference>
<dbReference type="NCBIfam" id="NF010167">
    <property type="entry name" value="PRK13648.1"/>
    <property type="match status" value="1"/>
</dbReference>
<dbReference type="PANTHER" id="PTHR43553:SF24">
    <property type="entry name" value="ENERGY-COUPLING FACTOR TRANSPORTER ATP-BINDING PROTEIN ECFA1"/>
    <property type="match status" value="1"/>
</dbReference>
<dbReference type="PANTHER" id="PTHR43553">
    <property type="entry name" value="HEAVY METAL TRANSPORTER"/>
    <property type="match status" value="1"/>
</dbReference>
<dbReference type="Pfam" id="PF00005">
    <property type="entry name" value="ABC_tran"/>
    <property type="match status" value="1"/>
</dbReference>
<dbReference type="SMART" id="SM00382">
    <property type="entry name" value="AAA"/>
    <property type="match status" value="1"/>
</dbReference>
<dbReference type="SUPFAM" id="SSF52540">
    <property type="entry name" value="P-loop containing nucleoside triphosphate hydrolases"/>
    <property type="match status" value="1"/>
</dbReference>
<dbReference type="PROSITE" id="PS00211">
    <property type="entry name" value="ABC_TRANSPORTER_1"/>
    <property type="match status" value="1"/>
</dbReference>
<dbReference type="PROSITE" id="PS50893">
    <property type="entry name" value="ABC_TRANSPORTER_2"/>
    <property type="match status" value="1"/>
</dbReference>
<dbReference type="PROSITE" id="PS51246">
    <property type="entry name" value="CBIO"/>
    <property type="match status" value="1"/>
</dbReference>
<proteinExistence type="inferred from homology"/>
<name>ECFA1_HALH5</name>
<organism>
    <name type="scientific">Halalkalibacterium halodurans (strain ATCC BAA-125 / DSM 18197 / FERM 7344 / JCM 9153 / C-125)</name>
    <name type="common">Bacillus halodurans</name>
    <dbReference type="NCBI Taxonomy" id="272558"/>
    <lineage>
        <taxon>Bacteria</taxon>
        <taxon>Bacillati</taxon>
        <taxon>Bacillota</taxon>
        <taxon>Bacilli</taxon>
        <taxon>Bacillales</taxon>
        <taxon>Bacillaceae</taxon>
        <taxon>Halalkalibacterium (ex Joshi et al. 2022)</taxon>
    </lineage>
</organism>
<sequence>MEKGLLLESVSYQYDANAAPVLKEIDIHVPLGEWVAVIGPNGSGKSTLAKLLNGLLLPTSGRVTFNGMSTMDEGTHWEIRQQVGLVFQNPEHQFVATTVRDDLAFGMENRGFPREKMIQRIEEVSIQVGIDHLLDEEPHRLSGGQKQRVAIAGILAVEPSVIVFDEATSMLDPQGRKDVLETMKQLHENGMTIISITHDVNEASQAGRVLLLEKGEVMLDGSPAVVFHEQDKLEAAGIDRPFAYQLQLALQSRGIQLEGALLKKEELVEALWKYKSSN</sequence>
<reference key="1">
    <citation type="journal article" date="1999" name="Biosci. Biotechnol. Biochem.">
        <title>Sequence analysis of a 32-kb region including the major ribosomal protein gene clusters from alkaliphilic Bacillus sp. strain C-125.</title>
        <authorList>
            <person name="Takami H."/>
            <person name="Takaki Y."/>
            <person name="Nakasone K."/>
            <person name="Hirama C."/>
            <person name="Inoue A."/>
            <person name="Horikoshi K."/>
        </authorList>
    </citation>
    <scope>NUCLEOTIDE SEQUENCE [GENOMIC DNA]</scope>
    <source>
        <strain>ATCC BAA-125 / DSM 18197 / FERM 7344 / JCM 9153 / C-125</strain>
    </source>
</reference>
<reference key="2">
    <citation type="journal article" date="2000" name="Nucleic Acids Res.">
        <title>Complete genome sequence of the alkaliphilic bacterium Bacillus halodurans and genomic sequence comparison with Bacillus subtilis.</title>
        <authorList>
            <person name="Takami H."/>
            <person name="Nakasone K."/>
            <person name="Takaki Y."/>
            <person name="Maeno G."/>
            <person name="Sasaki R."/>
            <person name="Masui N."/>
            <person name="Fuji F."/>
            <person name="Hirama C."/>
            <person name="Nakamura Y."/>
            <person name="Ogasawara N."/>
            <person name="Kuhara S."/>
            <person name="Horikoshi K."/>
        </authorList>
    </citation>
    <scope>NUCLEOTIDE SEQUENCE [LARGE SCALE GENOMIC DNA]</scope>
    <source>
        <strain>ATCC BAA-125 / DSM 18197 / FERM 7344 / JCM 9153 / C-125</strain>
    </source>
</reference>
<gene>
    <name evidence="1" type="primary">ecfA1</name>
    <name type="synonym">cbiO1</name>
    <name type="ordered locus">BH0164</name>
</gene>
<keyword id="KW-0067">ATP-binding</keyword>
<keyword id="KW-1003">Cell membrane</keyword>
<keyword id="KW-0472">Membrane</keyword>
<keyword id="KW-0547">Nucleotide-binding</keyword>
<keyword id="KW-1185">Reference proteome</keyword>
<keyword id="KW-1278">Translocase</keyword>
<keyword id="KW-0813">Transport</keyword>
<comment type="function">
    <text evidence="1">ATP-binding (A) component of a common energy-coupling factor (ECF) ABC-transporter complex. Unlike classic ABC transporters this ECF transporter provides the energy necessary to transport a number of different substrates.</text>
</comment>
<comment type="subunit">
    <text evidence="1">Forms a stable energy-coupling factor (ECF) transporter complex composed of 2 membrane-embedded substrate-binding proteins (S component), 2 ATP-binding proteins (A component) and 2 transmembrane proteins (T component).</text>
</comment>
<comment type="subcellular location">
    <subcellularLocation>
        <location evidence="1">Cell membrane</location>
        <topology evidence="1">Peripheral membrane protein</topology>
    </subcellularLocation>
</comment>
<comment type="similarity">
    <text evidence="1">Belongs to the ABC transporter superfamily. Energy-coupling factor EcfA family.</text>
</comment>
<protein>
    <recommendedName>
        <fullName evidence="1">Energy-coupling factor transporter ATP-binding protein EcfA1</fullName>
        <shortName evidence="1">ECF transporter A component EcfA1</shortName>
        <ecNumber evidence="1">7.-.-.-</ecNumber>
    </recommendedName>
</protein>
<feature type="chain" id="PRO_0000091980" description="Energy-coupling factor transporter ATP-binding protein EcfA1">
    <location>
        <begin position="1"/>
        <end position="278"/>
    </location>
</feature>
<feature type="domain" description="ABC transporter" evidence="1">
    <location>
        <begin position="5"/>
        <end position="239"/>
    </location>
</feature>
<feature type="binding site" evidence="1">
    <location>
        <begin position="39"/>
        <end position="46"/>
    </location>
    <ligand>
        <name>ATP</name>
        <dbReference type="ChEBI" id="CHEBI:30616"/>
    </ligand>
</feature>
<evidence type="ECO:0000255" key="1">
    <source>
        <dbReference type="HAMAP-Rule" id="MF_01710"/>
    </source>
</evidence>
<accession>Q9Z9J3</accession>